<dbReference type="EMBL" id="CP000034">
    <property type="protein sequence ID" value="ABB63251.1"/>
    <property type="molecule type" value="Genomic_DNA"/>
</dbReference>
<dbReference type="RefSeq" id="WP_000804907.1">
    <property type="nucleotide sequence ID" value="NC_007606.1"/>
</dbReference>
<dbReference type="RefSeq" id="YP_404742.1">
    <property type="nucleotide sequence ID" value="NC_007606.1"/>
</dbReference>
<dbReference type="SMR" id="Q32BQ4"/>
<dbReference type="EnsemblBacteria" id="ABB63251">
    <property type="protein sequence ID" value="ABB63251"/>
    <property type="gene ID" value="SDY_3247"/>
</dbReference>
<dbReference type="KEGG" id="sdy:SDY_3247"/>
<dbReference type="PATRIC" id="fig|300267.13.peg.3881"/>
<dbReference type="HOGENOM" id="CLU_005170_7_3_6"/>
<dbReference type="Proteomes" id="UP000002716">
    <property type="component" value="Chromosome"/>
</dbReference>
<dbReference type="GO" id="GO:0005886">
    <property type="term" value="C:plasma membrane"/>
    <property type="evidence" value="ECO:0007669"/>
    <property type="project" value="UniProtKB-SubCell"/>
</dbReference>
<dbReference type="GO" id="GO:0015297">
    <property type="term" value="F:antiporter activity"/>
    <property type="evidence" value="ECO:0007669"/>
    <property type="project" value="UniProtKB-KW"/>
</dbReference>
<dbReference type="InterPro" id="IPR030676">
    <property type="entry name" value="CitT-rel"/>
</dbReference>
<dbReference type="InterPro" id="IPR001898">
    <property type="entry name" value="SLC13A/DASS"/>
</dbReference>
<dbReference type="NCBIfam" id="TIGR00785">
    <property type="entry name" value="dass"/>
    <property type="match status" value="1"/>
</dbReference>
<dbReference type="PANTHER" id="PTHR42826">
    <property type="entry name" value="DICARBOXYLATE TRANSPORTER 2.1, CHLOROPLASTIC"/>
    <property type="match status" value="1"/>
</dbReference>
<dbReference type="Pfam" id="PF00939">
    <property type="entry name" value="Na_sulph_symp"/>
    <property type="match status" value="1"/>
</dbReference>
<dbReference type="PIRSF" id="PIRSF002457">
    <property type="entry name" value="DASS"/>
    <property type="match status" value="1"/>
</dbReference>
<sequence>MKPSTEWWRYLAPLAVIAIIALIPVPAGLESHTWLYFAVFTGVIVGLILEPVPGAVVAMVGISIIAILSPWLLFSPEQLAQPGFKFTAKSLSWAVSGFSNSVIWLIFAAFMFGTGYEKNGLGRRIALILVKKMGHRTLFLGYAVMFSELILAPVTPSNSARGAGIIYPIIRNLPPLYQLQPNDSSSRSIGSYIMWIGIVADCVTSAIFLTAMAPNLLLIGLMKSASHATLSWGDWFLGMLPLSILLVLLVPRLAYVLYPPVLKSGDQVPRWAETELQAMGPLCSREKRMLGLMVGALVLWIFGGDYIDAAMVGYSVVALMLLLRIISWDDIVSNKAAWNVFFWLASLITLATGLNNTGFISWFGKLLAGSLSGYSPTMVMVALIVVFYLLRYFFASATAYTSALAPMMIAAALAMPEIPLPVFCLMVGAAIGLGSILTPYATGPSPIYYGSGYLPTADYWRLGAIFGLIFLVLLVITGLLWMPVVLL</sequence>
<name>TTDT_SHIDS</name>
<reference key="1">
    <citation type="journal article" date="2005" name="Nucleic Acids Res.">
        <title>Genome dynamics and diversity of Shigella species, the etiologic agents of bacillary dysentery.</title>
        <authorList>
            <person name="Yang F."/>
            <person name="Yang J."/>
            <person name="Zhang X."/>
            <person name="Chen L."/>
            <person name="Jiang Y."/>
            <person name="Yan Y."/>
            <person name="Tang X."/>
            <person name="Wang J."/>
            <person name="Xiong Z."/>
            <person name="Dong J."/>
            <person name="Xue Y."/>
            <person name="Zhu Y."/>
            <person name="Xu X."/>
            <person name="Sun L."/>
            <person name="Chen S."/>
            <person name="Nie H."/>
            <person name="Peng J."/>
            <person name="Xu J."/>
            <person name="Wang Y."/>
            <person name="Yuan Z."/>
            <person name="Wen Y."/>
            <person name="Yao Z."/>
            <person name="Shen Y."/>
            <person name="Qiang B."/>
            <person name="Hou Y."/>
            <person name="Yu J."/>
            <person name="Jin Q."/>
        </authorList>
    </citation>
    <scope>NUCLEOTIDE SEQUENCE [LARGE SCALE GENOMIC DNA]</scope>
    <source>
        <strain>Sd197</strain>
    </source>
</reference>
<accession>Q32BQ4</accession>
<keyword id="KW-0050">Antiport</keyword>
<keyword id="KW-0997">Cell inner membrane</keyword>
<keyword id="KW-1003">Cell membrane</keyword>
<keyword id="KW-0472">Membrane</keyword>
<keyword id="KW-1185">Reference proteome</keyword>
<keyword id="KW-0812">Transmembrane</keyword>
<keyword id="KW-1133">Transmembrane helix</keyword>
<keyword id="KW-0813">Transport</keyword>
<evidence type="ECO:0000250" key="1">
    <source>
        <dbReference type="UniProtKB" id="P39414"/>
    </source>
</evidence>
<evidence type="ECO:0000255" key="2"/>
<evidence type="ECO:0000305" key="3"/>
<feature type="chain" id="PRO_0000262716" description="L-tartrate/succinate antiporter">
    <location>
        <begin position="1"/>
        <end position="487"/>
    </location>
</feature>
<feature type="transmembrane region" description="Helical" evidence="2">
    <location>
        <begin position="10"/>
        <end position="30"/>
    </location>
</feature>
<feature type="transmembrane region" description="Helical" evidence="2">
    <location>
        <begin position="33"/>
        <end position="53"/>
    </location>
</feature>
<feature type="transmembrane region" description="Helical" evidence="2">
    <location>
        <begin position="54"/>
        <end position="74"/>
    </location>
</feature>
<feature type="transmembrane region" description="Helical" evidence="2">
    <location>
        <begin position="93"/>
        <end position="113"/>
    </location>
</feature>
<feature type="transmembrane region" description="Helical" evidence="2">
    <location>
        <begin position="137"/>
        <end position="157"/>
    </location>
</feature>
<feature type="transmembrane region" description="Helical" evidence="2">
    <location>
        <begin position="189"/>
        <end position="209"/>
    </location>
</feature>
<feature type="transmembrane region" description="Helical" evidence="2">
    <location>
        <begin position="230"/>
        <end position="250"/>
    </location>
</feature>
<feature type="transmembrane region" description="Helical" evidence="2">
    <location>
        <begin position="292"/>
        <end position="312"/>
    </location>
</feature>
<feature type="transmembrane region" description="Helical" evidence="2">
    <location>
        <begin position="313"/>
        <end position="333"/>
    </location>
</feature>
<feature type="transmembrane region" description="Helical" evidence="2">
    <location>
        <begin position="340"/>
        <end position="360"/>
    </location>
</feature>
<feature type="transmembrane region" description="Helical" evidence="2">
    <location>
        <begin position="370"/>
        <end position="390"/>
    </location>
</feature>
<feature type="transmembrane region" description="Helical" evidence="2">
    <location>
        <begin position="393"/>
        <end position="413"/>
    </location>
</feature>
<feature type="transmembrane region" description="Helical" evidence="2">
    <location>
        <begin position="418"/>
        <end position="438"/>
    </location>
</feature>
<feature type="transmembrane region" description="Helical" evidence="2">
    <location>
        <begin position="465"/>
        <end position="485"/>
    </location>
</feature>
<organism>
    <name type="scientific">Shigella dysenteriae serotype 1 (strain Sd197)</name>
    <dbReference type="NCBI Taxonomy" id="300267"/>
    <lineage>
        <taxon>Bacteria</taxon>
        <taxon>Pseudomonadati</taxon>
        <taxon>Pseudomonadota</taxon>
        <taxon>Gammaproteobacteria</taxon>
        <taxon>Enterobacterales</taxon>
        <taxon>Enterobacteriaceae</taxon>
        <taxon>Shigella</taxon>
    </lineage>
</organism>
<comment type="function">
    <text evidence="1">Catalyzes the uptake of tartrate in exchange for intracellular succinate. Essential for anaerobic L-tartrate fermentation.</text>
</comment>
<comment type="catalytic activity">
    <reaction evidence="1">
        <text>(2R,3R)-tartrate(out) + succinate(in) = (2R,3R)-tartrate(in) + succinate(out)</text>
        <dbReference type="Rhea" id="RHEA:29259"/>
        <dbReference type="ChEBI" id="CHEBI:30031"/>
        <dbReference type="ChEBI" id="CHEBI:30924"/>
    </reaction>
    <physiologicalReaction direction="left-to-right" evidence="1">
        <dbReference type="Rhea" id="RHEA:29260"/>
    </physiologicalReaction>
</comment>
<comment type="subcellular location">
    <subcellularLocation>
        <location evidence="1">Cell inner membrane</location>
        <topology evidence="2">Multi-pass membrane protein</topology>
    </subcellularLocation>
</comment>
<comment type="similarity">
    <text evidence="3">Belongs to the SLC13A/DASS transporter (TC 2.A.47) family. DIT1 subfamily.</text>
</comment>
<proteinExistence type="inferred from homology"/>
<gene>
    <name type="primary">ttdT</name>
    <name type="ordered locus">SDY_3247</name>
</gene>
<protein>
    <recommendedName>
        <fullName evidence="1">L-tartrate/succinate antiporter</fullName>
    </recommendedName>
    <alternativeName>
        <fullName>Tartrate carrier</fullName>
    </alternativeName>
    <alternativeName>
        <fullName>Tartrate transporter</fullName>
    </alternativeName>
</protein>